<organism>
    <name type="scientific">Enterococcus faecalis (strain ATCC 700802 / V583)</name>
    <dbReference type="NCBI Taxonomy" id="226185"/>
    <lineage>
        <taxon>Bacteria</taxon>
        <taxon>Bacillati</taxon>
        <taxon>Bacillota</taxon>
        <taxon>Bacilli</taxon>
        <taxon>Lactobacillales</taxon>
        <taxon>Enterococcaceae</taxon>
        <taxon>Enterococcus</taxon>
    </lineage>
</organism>
<gene>
    <name type="primary">fabZ2</name>
    <name type="synonym">fabZ-2</name>
    <name type="ordered locus">EF_2878</name>
</gene>
<name>FABZ2_ENTFA</name>
<dbReference type="EC" id="4.2.1.59"/>
<dbReference type="EMBL" id="AE016830">
    <property type="protein sequence ID" value="AAO82568.1"/>
    <property type="molecule type" value="Genomic_DNA"/>
</dbReference>
<dbReference type="RefSeq" id="NP_816498.1">
    <property type="nucleotide sequence ID" value="NC_004668.1"/>
</dbReference>
<dbReference type="SMR" id="Q820T5"/>
<dbReference type="STRING" id="226185.EF_2878"/>
<dbReference type="EnsemblBacteria" id="AAO82568">
    <property type="protein sequence ID" value="AAO82568"/>
    <property type="gene ID" value="EF_2878"/>
</dbReference>
<dbReference type="KEGG" id="efa:EF2878"/>
<dbReference type="PATRIC" id="fig|226185.45.peg.695"/>
<dbReference type="eggNOG" id="COG0764">
    <property type="taxonomic scope" value="Bacteria"/>
</dbReference>
<dbReference type="HOGENOM" id="CLU_078912_3_0_9"/>
<dbReference type="Proteomes" id="UP000001415">
    <property type="component" value="Chromosome"/>
</dbReference>
<dbReference type="GO" id="GO:0005737">
    <property type="term" value="C:cytoplasm"/>
    <property type="evidence" value="ECO:0007669"/>
    <property type="project" value="UniProtKB-SubCell"/>
</dbReference>
<dbReference type="GO" id="GO:0016020">
    <property type="term" value="C:membrane"/>
    <property type="evidence" value="ECO:0007669"/>
    <property type="project" value="GOC"/>
</dbReference>
<dbReference type="GO" id="GO:0019171">
    <property type="term" value="F:(3R)-hydroxyacyl-[acyl-carrier-protein] dehydratase activity"/>
    <property type="evidence" value="ECO:0007669"/>
    <property type="project" value="UniProtKB-EC"/>
</dbReference>
<dbReference type="GO" id="GO:0006633">
    <property type="term" value="P:fatty acid biosynthetic process"/>
    <property type="evidence" value="ECO:0007669"/>
    <property type="project" value="UniProtKB-UniRule"/>
</dbReference>
<dbReference type="GO" id="GO:0009245">
    <property type="term" value="P:lipid A biosynthetic process"/>
    <property type="evidence" value="ECO:0007669"/>
    <property type="project" value="UniProtKB-UniRule"/>
</dbReference>
<dbReference type="CDD" id="cd01288">
    <property type="entry name" value="FabZ"/>
    <property type="match status" value="1"/>
</dbReference>
<dbReference type="FunFam" id="3.10.129.10:FF:000001">
    <property type="entry name" value="3-hydroxyacyl-[acyl-carrier-protein] dehydratase FabZ"/>
    <property type="match status" value="1"/>
</dbReference>
<dbReference type="Gene3D" id="3.10.129.10">
    <property type="entry name" value="Hotdog Thioesterase"/>
    <property type="match status" value="1"/>
</dbReference>
<dbReference type="HAMAP" id="MF_00406">
    <property type="entry name" value="FabZ"/>
    <property type="match status" value="1"/>
</dbReference>
<dbReference type="InterPro" id="IPR013114">
    <property type="entry name" value="FabA_FabZ"/>
</dbReference>
<dbReference type="InterPro" id="IPR010084">
    <property type="entry name" value="FabZ"/>
</dbReference>
<dbReference type="InterPro" id="IPR029069">
    <property type="entry name" value="HotDog_dom_sf"/>
</dbReference>
<dbReference type="NCBIfam" id="TIGR01750">
    <property type="entry name" value="fabZ"/>
    <property type="match status" value="1"/>
</dbReference>
<dbReference type="NCBIfam" id="NF000582">
    <property type="entry name" value="PRK00006.1"/>
    <property type="match status" value="1"/>
</dbReference>
<dbReference type="PANTHER" id="PTHR30272">
    <property type="entry name" value="3-HYDROXYACYL-[ACYL-CARRIER-PROTEIN] DEHYDRATASE"/>
    <property type="match status" value="1"/>
</dbReference>
<dbReference type="PANTHER" id="PTHR30272:SF1">
    <property type="entry name" value="3-HYDROXYACYL-[ACYL-CARRIER-PROTEIN] DEHYDRATASE"/>
    <property type="match status" value="1"/>
</dbReference>
<dbReference type="Pfam" id="PF07977">
    <property type="entry name" value="FabA"/>
    <property type="match status" value="1"/>
</dbReference>
<dbReference type="SUPFAM" id="SSF54637">
    <property type="entry name" value="Thioesterase/thiol ester dehydrase-isomerase"/>
    <property type="match status" value="1"/>
</dbReference>
<sequence>MKLTITEIQEILPHRYPFLLLDSVEEVIPGERVVAKKNVTVNEQVFQGHFPGNPVLPGVLIIESLAQAGAVALLSMPEFKGKTAYFGGLDKAKFRQKVTPGDTLILEVELLKVRASAGMGKGVAKVNGKKVAEAELTFMIG</sequence>
<keyword id="KW-0963">Cytoplasm</keyword>
<keyword id="KW-0441">Lipid A biosynthesis</keyword>
<keyword id="KW-0444">Lipid biosynthesis</keyword>
<keyword id="KW-0443">Lipid metabolism</keyword>
<keyword id="KW-0456">Lyase</keyword>
<keyword id="KW-1185">Reference proteome</keyword>
<reference key="1">
    <citation type="journal article" date="2003" name="Science">
        <title>Role of mobile DNA in the evolution of vancomycin-resistant Enterococcus faecalis.</title>
        <authorList>
            <person name="Paulsen I.T."/>
            <person name="Banerjei L."/>
            <person name="Myers G.S.A."/>
            <person name="Nelson K.E."/>
            <person name="Seshadri R."/>
            <person name="Read T.D."/>
            <person name="Fouts D.E."/>
            <person name="Eisen J.A."/>
            <person name="Gill S.R."/>
            <person name="Heidelberg J.F."/>
            <person name="Tettelin H."/>
            <person name="Dodson R.J."/>
            <person name="Umayam L.A."/>
            <person name="Brinkac L.M."/>
            <person name="Beanan M.J."/>
            <person name="Daugherty S.C."/>
            <person name="DeBoy R.T."/>
            <person name="Durkin S.A."/>
            <person name="Kolonay J.F."/>
            <person name="Madupu R."/>
            <person name="Nelson W.C."/>
            <person name="Vamathevan J.J."/>
            <person name="Tran B."/>
            <person name="Upton J."/>
            <person name="Hansen T."/>
            <person name="Shetty J."/>
            <person name="Khouri H.M."/>
            <person name="Utterback T.R."/>
            <person name="Radune D."/>
            <person name="Ketchum K.A."/>
            <person name="Dougherty B.A."/>
            <person name="Fraser C.M."/>
        </authorList>
    </citation>
    <scope>NUCLEOTIDE SEQUENCE [LARGE SCALE GENOMIC DNA]</scope>
    <source>
        <strain>ATCC 700802 / V583</strain>
    </source>
</reference>
<proteinExistence type="inferred from homology"/>
<comment type="function">
    <text evidence="1">Involved in unsaturated fatty acids biosynthesis. Catalyzes the dehydration of short chain beta-hydroxyacyl-ACPs and long chain saturated and unsaturated beta-hydroxyacyl-ACPs (By similarity).</text>
</comment>
<comment type="catalytic activity">
    <reaction>
        <text>a (3R)-hydroxyacyl-[ACP] = a (2E)-enoyl-[ACP] + H2O</text>
        <dbReference type="Rhea" id="RHEA:13097"/>
        <dbReference type="Rhea" id="RHEA-COMP:9925"/>
        <dbReference type="Rhea" id="RHEA-COMP:9945"/>
        <dbReference type="ChEBI" id="CHEBI:15377"/>
        <dbReference type="ChEBI" id="CHEBI:78784"/>
        <dbReference type="ChEBI" id="CHEBI:78827"/>
        <dbReference type="EC" id="4.2.1.59"/>
    </reaction>
</comment>
<comment type="subcellular location">
    <subcellularLocation>
        <location evidence="1">Cytoplasm</location>
    </subcellularLocation>
</comment>
<comment type="similarity">
    <text evidence="2">Belongs to the thioester dehydratase family. FabZ subfamily.</text>
</comment>
<accession>Q820T5</accession>
<protein>
    <recommendedName>
        <fullName>3-hydroxyacyl-[acyl-carrier-protein] dehydratase FabZ</fullName>
        <ecNumber>4.2.1.59</ecNumber>
    </recommendedName>
    <alternativeName>
        <fullName>(3R)-hydroxymyristoyl-[acyl-carrier-protein] dehydratase</fullName>
        <shortName>(3R)-hydroxymyristoyl-ACP dehydrase</shortName>
    </alternativeName>
    <alternativeName>
        <fullName>Beta-hydroxyacyl-ACP dehydratase</fullName>
    </alternativeName>
</protein>
<evidence type="ECO:0000250" key="1"/>
<evidence type="ECO:0000305" key="2"/>
<feature type="chain" id="PRO_0000091677" description="3-hydroxyacyl-[acyl-carrier-protein] dehydratase FabZ">
    <location>
        <begin position="1"/>
        <end position="141"/>
    </location>
</feature>
<feature type="active site" evidence="1">
    <location>
        <position position="49"/>
    </location>
</feature>